<gene>
    <name type="primary">ZNF365</name>
</gene>
<feature type="chain" id="PRO_0000076376" description="Protein ZNF365">
    <location>
        <begin position="1"/>
        <end position="407"/>
    </location>
</feature>
<feature type="zinc finger region" description="C2H2-type; degenerate" evidence="5">
    <location>
        <begin position="26"/>
        <end position="51"/>
    </location>
</feature>
<feature type="region of interest" description="Disordered" evidence="6">
    <location>
        <begin position="347"/>
        <end position="392"/>
    </location>
</feature>
<feature type="coiled-coil region" evidence="4">
    <location>
        <begin position="169"/>
        <end position="296"/>
    </location>
</feature>
<feature type="compositionally biased region" description="Basic and acidic residues" evidence="6">
    <location>
        <begin position="362"/>
        <end position="381"/>
    </location>
</feature>
<feature type="modified residue" description="Phosphoserine" evidence="3">
    <location>
        <position position="16"/>
    </location>
</feature>
<feature type="modified residue" description="Phosphoserine" evidence="3">
    <location>
        <position position="138"/>
    </location>
</feature>
<feature type="modified residue" description="Phosphothreonine" evidence="3">
    <location>
        <position position="175"/>
    </location>
</feature>
<feature type="modified residue" description="Phosphoserine" evidence="1">
    <location>
        <position position="369"/>
    </location>
</feature>
<keyword id="KW-0175">Coiled coil</keyword>
<keyword id="KW-0963">Cytoplasm</keyword>
<keyword id="KW-0206">Cytoskeleton</keyword>
<keyword id="KW-0479">Metal-binding</keyword>
<keyword id="KW-0524">Neurogenesis</keyword>
<keyword id="KW-0597">Phosphoprotein</keyword>
<keyword id="KW-1185">Reference proteome</keyword>
<keyword id="KW-0862">Zinc</keyword>
<keyword id="KW-0863">Zinc-finger</keyword>
<organism>
    <name type="scientific">Pongo abelii</name>
    <name type="common">Sumatran orangutan</name>
    <name type="synonym">Pongo pygmaeus abelii</name>
    <dbReference type="NCBI Taxonomy" id="9601"/>
    <lineage>
        <taxon>Eukaryota</taxon>
        <taxon>Metazoa</taxon>
        <taxon>Chordata</taxon>
        <taxon>Craniata</taxon>
        <taxon>Vertebrata</taxon>
        <taxon>Euteleostomi</taxon>
        <taxon>Mammalia</taxon>
        <taxon>Eutheria</taxon>
        <taxon>Euarchontoglires</taxon>
        <taxon>Primates</taxon>
        <taxon>Haplorrhini</taxon>
        <taxon>Catarrhini</taxon>
        <taxon>Hominidae</taxon>
        <taxon>Pongo</taxon>
    </lineage>
</organism>
<dbReference type="EMBL" id="CR859375">
    <property type="protein sequence ID" value="CAH91548.1"/>
    <property type="molecule type" value="mRNA"/>
</dbReference>
<dbReference type="RefSeq" id="NP_001125908.1">
    <property type="nucleotide sequence ID" value="NM_001132436.1"/>
</dbReference>
<dbReference type="SMR" id="Q5R9L2"/>
<dbReference type="FunCoup" id="Q5R9L2">
    <property type="interactions" value="134"/>
</dbReference>
<dbReference type="STRING" id="9601.ENSPPYP00000002800"/>
<dbReference type="GeneID" id="100172841"/>
<dbReference type="KEGG" id="pon:100172841"/>
<dbReference type="CTD" id="22891"/>
<dbReference type="eggNOG" id="ENOG502QT88">
    <property type="taxonomic scope" value="Eukaryota"/>
</dbReference>
<dbReference type="InParanoid" id="Q5R9L2"/>
<dbReference type="OrthoDB" id="271433at2759"/>
<dbReference type="Proteomes" id="UP000001595">
    <property type="component" value="Unplaced"/>
</dbReference>
<dbReference type="GO" id="GO:0005813">
    <property type="term" value="C:centrosome"/>
    <property type="evidence" value="ECO:0007669"/>
    <property type="project" value="UniProtKB-SubCell"/>
</dbReference>
<dbReference type="GO" id="GO:0005737">
    <property type="term" value="C:cytoplasm"/>
    <property type="evidence" value="ECO:0007669"/>
    <property type="project" value="UniProtKB-KW"/>
</dbReference>
<dbReference type="GO" id="GO:0008270">
    <property type="term" value="F:zinc ion binding"/>
    <property type="evidence" value="ECO:0007669"/>
    <property type="project" value="UniProtKB-KW"/>
</dbReference>
<dbReference type="GO" id="GO:0021687">
    <property type="term" value="P:cerebellar molecular layer morphogenesis"/>
    <property type="evidence" value="ECO:0000250"/>
    <property type="project" value="UniProtKB"/>
</dbReference>
<dbReference type="GO" id="GO:0140059">
    <property type="term" value="P:dendrite arborization"/>
    <property type="evidence" value="ECO:0000250"/>
    <property type="project" value="UniProtKB"/>
</dbReference>
<dbReference type="GO" id="GO:0060997">
    <property type="term" value="P:dendritic spine morphogenesis"/>
    <property type="evidence" value="ECO:0000250"/>
    <property type="project" value="UniProtKB"/>
</dbReference>
<dbReference type="GO" id="GO:0010977">
    <property type="term" value="P:negative regulation of neuron projection development"/>
    <property type="evidence" value="ECO:0000250"/>
    <property type="project" value="UniProtKB"/>
</dbReference>
<dbReference type="GO" id="GO:0048714">
    <property type="term" value="P:positive regulation of oligodendrocyte differentiation"/>
    <property type="evidence" value="ECO:0000250"/>
    <property type="project" value="UniProtKB"/>
</dbReference>
<dbReference type="GO" id="GO:0110026">
    <property type="term" value="P:regulation of DNA strand resection involved in replication fork processing"/>
    <property type="evidence" value="ECO:0000250"/>
    <property type="project" value="UniProtKB"/>
</dbReference>
<dbReference type="GO" id="GO:0010569">
    <property type="term" value="P:regulation of double-strand break repair via homologous recombination"/>
    <property type="evidence" value="ECO:0000250"/>
    <property type="project" value="UniProtKB"/>
</dbReference>
<dbReference type="GO" id="GO:0000723">
    <property type="term" value="P:telomere maintenance"/>
    <property type="evidence" value="ECO:0000250"/>
    <property type="project" value="UniProtKB"/>
</dbReference>
<dbReference type="InterPro" id="IPR057038">
    <property type="entry name" value="FBX41/ZN365_Znf-C2H2"/>
</dbReference>
<dbReference type="InterPro" id="IPR052283">
    <property type="entry name" value="GenomicStab_NeuMorph_Reg"/>
</dbReference>
<dbReference type="PANTHER" id="PTHR15739:SF2">
    <property type="entry name" value="PROTEIN ZNF365"/>
    <property type="match status" value="1"/>
</dbReference>
<dbReference type="PANTHER" id="PTHR15739">
    <property type="entry name" value="ZINC FINGER PROTEIN"/>
    <property type="match status" value="1"/>
</dbReference>
<dbReference type="Pfam" id="PF23165">
    <property type="entry name" value="zf-C2H2_FBX41"/>
    <property type="match status" value="1"/>
</dbReference>
<name>ZN365_PONAB</name>
<proteinExistence type="evidence at transcript level"/>
<accession>Q5R9L2</accession>
<protein>
    <recommendedName>
        <fullName>Protein ZNF365</fullName>
    </recommendedName>
</protein>
<reference key="1">
    <citation type="submission" date="2004-11" db="EMBL/GenBank/DDBJ databases">
        <authorList>
            <consortium name="The German cDNA consortium"/>
        </authorList>
    </citation>
    <scope>NUCLEOTIDE SEQUENCE [LARGE SCALE MRNA]</scope>
    <source>
        <tissue>Brain cortex</tissue>
    </source>
</reference>
<comment type="function">
    <text evidence="2 3">Involved in the regulation of neurogenesis. Negatively regulates neurite outgrowth (By similarity). Involved in the morphogenesis of basket cells in the somatosensory cortex during embryogenesis. Involved in the positive regulation of oligodendrocyte differentiation during postnatal growth. Involved in dendritic arborization, morphogenesis of spine density dendrite, and establishment of postsynaptic dendrite density in cortical pyramidal neurons (By similarity). Involved in homologous recombination (HR) repair pathway. Required for proper resolution of DNA double-strand breaks (DSBs) by HR. Is required for recovery of stalled replication forks, and directly contributes to genomic stability. Interacts with PARP1 and mediates MRE11-dependent DNA end resection during replication fork recovery. Contributes to genomic stability by preventing telomere dysfunction (By similarity).</text>
</comment>
<comment type="subunit">
    <text evidence="2">Homodimers. Interacts with NDE1 and NDEL1 (By similarity). Interacts with DISC1. Interacts with PARP1 (By similarity). Interacts with MCRS1 (By similarity).</text>
</comment>
<comment type="subcellular location">
    <subcellularLocation>
        <location evidence="2">Cytoplasm</location>
        <location evidence="2">Cytoskeleton</location>
        <location evidence="2">Microtubule organizing center</location>
        <location evidence="2">Centrosome</location>
    </subcellularLocation>
</comment>
<sequence length="407" mass="46506">MQQKAFEESRYPWQESFENVAVCLPFRCPRCGDHTRFRSLSSLRAHLEFSHSYEERTLLTKCSLFPSLKDTDLVTSSELLKPGKLQSSGNVVKQKPSYVNLYSISHEHSKDRKPFEVVAERPVSYVQTYTAMDLRADSLDGPRSGPGLPTSDTKASFEAHVREKFNRMVEAVDRTIEKRIDKLTKELAQKTAELLEVRAAFVQLTQKKQEVQRRERALNRQVDVAVEMIAVLRQRLTESEEELLRKEEEVVTFNHFLEAAAEKEVQGKARLQDFIENLVQRVELAEKQLEYYQSQQASGFGHDLSGHVLTDISSNRKPKCLSRGHPHSVCNHSDLKAHFHPKGRNHLKKAKDDRASMQPAKAIHEQAESSRDLCRPPKKGELLGFGRKGNIRPKMAKKKPTAIVNII</sequence>
<evidence type="ECO:0000250" key="1">
    <source>
        <dbReference type="UniProtKB" id="Q5PQS2"/>
    </source>
</evidence>
<evidence type="ECO:0000250" key="2">
    <source>
        <dbReference type="UniProtKB" id="Q70YC5"/>
    </source>
</evidence>
<evidence type="ECO:0000250" key="3">
    <source>
        <dbReference type="UniProtKB" id="Q8BG89"/>
    </source>
</evidence>
<evidence type="ECO:0000255" key="4"/>
<evidence type="ECO:0000255" key="5">
    <source>
        <dbReference type="PROSITE-ProRule" id="PRU00042"/>
    </source>
</evidence>
<evidence type="ECO:0000256" key="6">
    <source>
        <dbReference type="SAM" id="MobiDB-lite"/>
    </source>
</evidence>